<name>HS105_BOVIN</name>
<dbReference type="EMBL" id="BC122574">
    <property type="protein sequence ID" value="AAI22575.1"/>
    <property type="molecule type" value="mRNA"/>
</dbReference>
<dbReference type="RefSeq" id="NP_001068770.1">
    <property type="nucleotide sequence ID" value="NM_001075302.1"/>
</dbReference>
<dbReference type="SMR" id="Q0IIM3"/>
<dbReference type="FunCoup" id="Q0IIM3">
    <property type="interactions" value="3863"/>
</dbReference>
<dbReference type="STRING" id="9913.ENSBTAP00000006600"/>
<dbReference type="iPTMnet" id="Q0IIM3"/>
<dbReference type="PaxDb" id="9913-ENSBTAP00000006600"/>
<dbReference type="PeptideAtlas" id="Q0IIM3"/>
<dbReference type="Ensembl" id="ENSBTAT00000006600.3">
    <property type="protein sequence ID" value="ENSBTAP00000006600.2"/>
    <property type="gene ID" value="ENSBTAG00000005012.5"/>
</dbReference>
<dbReference type="GeneID" id="507165"/>
<dbReference type="KEGG" id="bta:507165"/>
<dbReference type="CTD" id="10808"/>
<dbReference type="VEuPathDB" id="HostDB:ENSBTAG00000005012"/>
<dbReference type="VGNC" id="VGNC:53817">
    <property type="gene designation" value="HSPH1"/>
</dbReference>
<dbReference type="eggNOG" id="KOG0103">
    <property type="taxonomic scope" value="Eukaryota"/>
</dbReference>
<dbReference type="GeneTree" id="ENSGT00940000159635"/>
<dbReference type="HOGENOM" id="CLU_005965_5_1_1"/>
<dbReference type="InParanoid" id="Q0IIM3"/>
<dbReference type="OMA" id="APVHIEC"/>
<dbReference type="OrthoDB" id="434160at2759"/>
<dbReference type="TreeFam" id="TF105043"/>
<dbReference type="Reactome" id="R-BTA-3371453">
    <property type="pathway name" value="Regulation of HSF1-mediated heat shock response"/>
</dbReference>
<dbReference type="PRO" id="PR:Q0IIM3"/>
<dbReference type="Proteomes" id="UP000009136">
    <property type="component" value="Chromosome 12"/>
</dbReference>
<dbReference type="Bgee" id="ENSBTAG00000005012">
    <property type="expression patterns" value="Expressed in occipital lobe and 101 other cell types or tissues"/>
</dbReference>
<dbReference type="GO" id="GO:0005829">
    <property type="term" value="C:cytosol"/>
    <property type="evidence" value="ECO:0000318"/>
    <property type="project" value="GO_Central"/>
</dbReference>
<dbReference type="GO" id="GO:0005634">
    <property type="term" value="C:nucleus"/>
    <property type="evidence" value="ECO:0000318"/>
    <property type="project" value="GO_Central"/>
</dbReference>
<dbReference type="GO" id="GO:0000774">
    <property type="term" value="F:adenyl-nucleotide exchange factor activity"/>
    <property type="evidence" value="ECO:0000250"/>
    <property type="project" value="UniProtKB"/>
</dbReference>
<dbReference type="GO" id="GO:0005524">
    <property type="term" value="F:ATP binding"/>
    <property type="evidence" value="ECO:0007669"/>
    <property type="project" value="UniProtKB-KW"/>
</dbReference>
<dbReference type="GO" id="GO:0140662">
    <property type="term" value="F:ATP-dependent protein folding chaperone"/>
    <property type="evidence" value="ECO:0007669"/>
    <property type="project" value="InterPro"/>
</dbReference>
<dbReference type="GO" id="GO:0006457">
    <property type="term" value="P:protein folding"/>
    <property type="evidence" value="ECO:0000318"/>
    <property type="project" value="GO_Central"/>
</dbReference>
<dbReference type="CDD" id="cd11739">
    <property type="entry name" value="ASKHA_NBD_HSP70_HSPH1"/>
    <property type="match status" value="1"/>
</dbReference>
<dbReference type="FunFam" id="1.20.1270.10:FF:000002">
    <property type="entry name" value="Heat shock 70 kDa protein 4"/>
    <property type="match status" value="1"/>
</dbReference>
<dbReference type="FunFam" id="3.30.30.30:FF:000002">
    <property type="entry name" value="Heat shock 70 kDa protein 4"/>
    <property type="match status" value="1"/>
</dbReference>
<dbReference type="FunFam" id="3.30.420.40:FF:000171">
    <property type="entry name" value="Heat shock 70 kDa protein 4"/>
    <property type="match status" value="1"/>
</dbReference>
<dbReference type="FunFam" id="3.90.640.10:FF:000004">
    <property type="entry name" value="Heat shock 70 kDa protein 4"/>
    <property type="match status" value="1"/>
</dbReference>
<dbReference type="FunFam" id="3.30.420.40:FF:000243">
    <property type="entry name" value="Heat shock protein 105 kDa"/>
    <property type="match status" value="1"/>
</dbReference>
<dbReference type="FunFam" id="1.20.1270.10:FF:000012">
    <property type="entry name" value="Heat shock protein 105 kDa isoform 1"/>
    <property type="match status" value="1"/>
</dbReference>
<dbReference type="FunFam" id="2.60.34.10:FF:000007">
    <property type="entry name" value="Heat shock protein 105 kDa isoform 1"/>
    <property type="match status" value="1"/>
</dbReference>
<dbReference type="FunFam" id="3.30.420.40:FF:000495">
    <property type="entry name" value="Heat shock protein 4b"/>
    <property type="match status" value="1"/>
</dbReference>
<dbReference type="FunFam" id="3.30.420.40:FF:000767">
    <property type="entry name" value="Heat shock protein 70 (HSP70)-4, putative"/>
    <property type="match status" value="1"/>
</dbReference>
<dbReference type="Gene3D" id="1.20.1270.10">
    <property type="match status" value="2"/>
</dbReference>
<dbReference type="Gene3D" id="3.30.30.30">
    <property type="match status" value="1"/>
</dbReference>
<dbReference type="Gene3D" id="3.30.420.40">
    <property type="match status" value="2"/>
</dbReference>
<dbReference type="Gene3D" id="3.90.640.10">
    <property type="entry name" value="Actin, Chain A, domain 4"/>
    <property type="match status" value="1"/>
</dbReference>
<dbReference type="Gene3D" id="2.60.34.10">
    <property type="entry name" value="Substrate Binding Domain Of DNAk, Chain A, domain 1"/>
    <property type="match status" value="1"/>
</dbReference>
<dbReference type="InterPro" id="IPR043129">
    <property type="entry name" value="ATPase_NBD"/>
</dbReference>
<dbReference type="InterPro" id="IPR018181">
    <property type="entry name" value="Heat_shock_70_CS"/>
</dbReference>
<dbReference type="InterPro" id="IPR029048">
    <property type="entry name" value="HSP70_C_sf"/>
</dbReference>
<dbReference type="InterPro" id="IPR029047">
    <property type="entry name" value="HSP70_peptide-bd_sf"/>
</dbReference>
<dbReference type="InterPro" id="IPR013126">
    <property type="entry name" value="Hsp_70_fam"/>
</dbReference>
<dbReference type="InterPro" id="IPR042053">
    <property type="entry name" value="HSPH1_NBD"/>
</dbReference>
<dbReference type="PANTHER" id="PTHR45639:SF2">
    <property type="entry name" value="HEAT SHOCK PROTEIN 105 KDA"/>
    <property type="match status" value="1"/>
</dbReference>
<dbReference type="PANTHER" id="PTHR45639">
    <property type="entry name" value="HSC70CB, ISOFORM G-RELATED"/>
    <property type="match status" value="1"/>
</dbReference>
<dbReference type="Pfam" id="PF00012">
    <property type="entry name" value="HSP70"/>
    <property type="match status" value="1"/>
</dbReference>
<dbReference type="PRINTS" id="PR00301">
    <property type="entry name" value="HEATSHOCK70"/>
</dbReference>
<dbReference type="SUPFAM" id="SSF53067">
    <property type="entry name" value="Actin-like ATPase domain"/>
    <property type="match status" value="2"/>
</dbReference>
<dbReference type="SUPFAM" id="SSF100934">
    <property type="entry name" value="Heat shock protein 70kD (HSP70), C-terminal subdomain"/>
    <property type="match status" value="2"/>
</dbReference>
<dbReference type="SUPFAM" id="SSF100920">
    <property type="entry name" value="Heat shock protein 70kD (HSP70), peptide-binding domain"/>
    <property type="match status" value="1"/>
</dbReference>
<dbReference type="PROSITE" id="PS01036">
    <property type="entry name" value="HSP70_3"/>
    <property type="match status" value="1"/>
</dbReference>
<organism>
    <name type="scientific">Bos taurus</name>
    <name type="common">Bovine</name>
    <dbReference type="NCBI Taxonomy" id="9913"/>
    <lineage>
        <taxon>Eukaryota</taxon>
        <taxon>Metazoa</taxon>
        <taxon>Chordata</taxon>
        <taxon>Craniata</taxon>
        <taxon>Vertebrata</taxon>
        <taxon>Euteleostomi</taxon>
        <taxon>Mammalia</taxon>
        <taxon>Eutheria</taxon>
        <taxon>Laurasiatheria</taxon>
        <taxon>Artiodactyla</taxon>
        <taxon>Ruminantia</taxon>
        <taxon>Pecora</taxon>
        <taxon>Bovidae</taxon>
        <taxon>Bovinae</taxon>
        <taxon>Bos</taxon>
    </lineage>
</organism>
<proteinExistence type="evidence at transcript level"/>
<keyword id="KW-0007">Acetylation</keyword>
<keyword id="KW-0067">ATP-binding</keyword>
<keyword id="KW-0963">Cytoplasm</keyword>
<keyword id="KW-0547">Nucleotide-binding</keyword>
<keyword id="KW-0597">Phosphoprotein</keyword>
<keyword id="KW-1185">Reference proteome</keyword>
<keyword id="KW-0346">Stress response</keyword>
<sequence length="859" mass="96726">MSVVGLDVGSQSCYIAVARAGGIETIANEFSDRCTPSVISFGSKNRTIGVAAKSQQITHANNTVSNFKRFHGRAFNDPFIQKEKENLSYDLVPMKNGGVGIKVMYMDEEHLFSVEQITAMLLTKLKETAENNLKKPVTDCVISVPSFFTDAERRSVLDAAQIVGLNCLRLMNDMTAVALNYGIYKQDLPSLDEKPRIVVFVDMGHSAFQVSACAFNKGKLKVLGTAFDPFLGGKNFDAKLVEYFCAEFKTKYKLDAKSKIRALLRLYQECEKLKKLMSSNSTDLPLNIECFMNDKDVSGKMNRAQFEELCADLLQKIEVPLYLLMEQTQLKVEDVSAVEIVGGTTRIPAVKEKIAKFFGKDVSTTLNADEAVARGCALQCAILSPAFKVREFSVTDAVPFPISLVWSHDSEDAEGVHEVFSRNHAAPFSKVLTFLRSGPFELEAFYSDPQGVPYPEAKIGRFIVQNVSAQKDGEKSRVKVKVRVNTHGIFTISTASMVEKIPAEENEVSSLEADMDCQNQRPPENPDAEKNIQQDNNEAGTQPQVQTDGHQTSQSPPSPELTSEENKIPDADKANEKKVDQPPEAKKPKIKVVNVELPIEANLVWQLGKDLLNMYIETEGKMIMQDKLEKERNDAKNAVEEYVYEFRDKLCGPYEKFICEQDHQKFLRLLTETENWLYEEGEDQAKQAYVDKLEELMKIGTPIKVRFQEAEERPKIFEELGQRLQHYAKIAADFRNNDEKYNHIDESEMKKVEKSVNEMMEWMNNVMSAQAKKSLDQDPVVCAQEIRAKIKELNNNCEPVVTQPKPKIESPKLERTPNGPSTDKKEEDLDGKNNFSAEPPHQNGECYPNEKSSINMDLD</sequence>
<accession>Q0IIM3</accession>
<evidence type="ECO:0000250" key="1">
    <source>
        <dbReference type="UniProtKB" id="Q61699"/>
    </source>
</evidence>
<evidence type="ECO:0000250" key="2">
    <source>
        <dbReference type="UniProtKB" id="Q92598"/>
    </source>
</evidence>
<evidence type="ECO:0000256" key="3">
    <source>
        <dbReference type="SAM" id="MobiDB-lite"/>
    </source>
</evidence>
<evidence type="ECO:0000305" key="4"/>
<feature type="initiator methionine" description="Removed" evidence="2">
    <location>
        <position position="1"/>
    </location>
</feature>
<feature type="chain" id="PRO_0000289944" description="Heat shock protein 105 kDa">
    <location>
        <begin position="2"/>
        <end position="859"/>
    </location>
</feature>
<feature type="region of interest" description="Disordered" evidence="3">
    <location>
        <begin position="515"/>
        <end position="585"/>
    </location>
</feature>
<feature type="region of interest" description="Disordered" evidence="3">
    <location>
        <begin position="797"/>
        <end position="859"/>
    </location>
</feature>
<feature type="compositionally biased region" description="Polar residues" evidence="3">
    <location>
        <begin position="533"/>
        <end position="555"/>
    </location>
</feature>
<feature type="compositionally biased region" description="Basic and acidic residues" evidence="3">
    <location>
        <begin position="564"/>
        <end position="585"/>
    </location>
</feature>
<feature type="compositionally biased region" description="Basic and acidic residues" evidence="3">
    <location>
        <begin position="806"/>
        <end position="815"/>
    </location>
</feature>
<feature type="compositionally biased region" description="Basic and acidic residues" evidence="3">
    <location>
        <begin position="822"/>
        <end position="831"/>
    </location>
</feature>
<feature type="compositionally biased region" description="Polar residues" evidence="3">
    <location>
        <begin position="850"/>
        <end position="859"/>
    </location>
</feature>
<feature type="modified residue" description="N-acetylserine" evidence="2">
    <location>
        <position position="2"/>
    </location>
</feature>
<feature type="modified residue" description="N6-acetyllysine" evidence="1">
    <location>
        <position position="471"/>
    </location>
</feature>
<feature type="modified residue" description="Phosphoserine" evidence="1">
    <location>
        <position position="509"/>
    </location>
</feature>
<feature type="modified residue" description="Phosphoserine" evidence="1">
    <location>
        <position position="510"/>
    </location>
</feature>
<feature type="modified residue" description="Phosphoserine" evidence="2">
    <location>
        <position position="558"/>
    </location>
</feature>
<feature type="modified residue" description="Phosphothreonine" evidence="2">
    <location>
        <position position="562"/>
    </location>
</feature>
<feature type="modified residue" description="Phosphoserine" evidence="2">
    <location>
        <position position="810"/>
    </location>
</feature>
<feature type="modified residue" description="Phosphothreonine" evidence="2">
    <location>
        <position position="816"/>
    </location>
</feature>
<reference key="1">
    <citation type="submission" date="2006-08" db="EMBL/GenBank/DDBJ databases">
        <authorList>
            <consortium name="NIH - Mammalian Gene Collection (MGC) project"/>
        </authorList>
    </citation>
    <scope>NUCLEOTIDE SEQUENCE [LARGE SCALE MRNA]</scope>
    <source>
        <strain>Hereford</strain>
        <tissue>Uterus</tissue>
    </source>
</reference>
<comment type="function">
    <text evidence="1 2">Acts as a nucleotide-exchange factor (NEF) for chaperone proteins HSPA1A and HSPA1B, promoting the release of ADP from HSPA1A/B thereby triggering substrate release. Prevents the aggregation of denatured proteins in cells under severe stress, on which the ATP levels decrease markedly. Inhibits HSPA8/HSC70 ATPase and chaperone activities.</text>
</comment>
<comment type="subunit">
    <text evidence="1 2">Interacts with HSPA8/HSC70. Interacts with HSPA1A (via NBD) and HSPA1B (via NBD).</text>
</comment>
<comment type="subcellular location">
    <subcellularLocation>
        <location evidence="2">Cytoplasm</location>
    </subcellularLocation>
</comment>
<comment type="PTM">
    <text evidence="1">Phosphorylation on Ser-509 may be important for regulation of the HSPA8/HSC70 chaperone activity.</text>
</comment>
<comment type="similarity">
    <text evidence="4">Belongs to the heat shock protein 70 family.</text>
</comment>
<protein>
    <recommendedName>
        <fullName>Heat shock protein 105 kDa</fullName>
    </recommendedName>
    <alternativeName>
        <fullName>Heat shock 110 kDa protein</fullName>
    </alternativeName>
</protein>
<gene>
    <name type="primary">HSPH1</name>
</gene>